<accession>C0PZ50</accession>
<evidence type="ECO:0000255" key="1">
    <source>
        <dbReference type="HAMAP-Rule" id="MF_01595"/>
    </source>
</evidence>
<evidence type="ECO:0000256" key="2">
    <source>
        <dbReference type="SAM" id="MobiDB-lite"/>
    </source>
</evidence>
<evidence type="ECO:0000305" key="3"/>
<keyword id="KW-0963">Cytoplasm</keyword>
<keyword id="KW-0460">Magnesium</keyword>
<keyword id="KW-0479">Metal-binding</keyword>
<keyword id="KW-0548">Nucleotidyltransferase</keyword>
<keyword id="KW-0694">RNA-binding</keyword>
<keyword id="KW-0808">Transferase</keyword>
<protein>
    <recommendedName>
        <fullName evidence="1">Polyribonucleotide nucleotidyltransferase</fullName>
        <ecNumber evidence="1">2.7.7.8</ecNumber>
    </recommendedName>
    <alternativeName>
        <fullName evidence="1">Polynucleotide phosphorylase</fullName>
        <shortName evidence="1">PNPase</shortName>
    </alternativeName>
</protein>
<gene>
    <name evidence="1" type="primary">pnp</name>
    <name type="ordered locus">SPC_3353</name>
</gene>
<name>PNP_SALPC</name>
<sequence length="711" mass="77039">MLNPIVRKFQYGQHTVTLETGMMARQATAAVMVSMDDTAVFVTVVGQKKAKPGQDFFPLTVNYQERTYAAGRIPGSFFRREGRPSEGETLIARLIDRPVRPLFPEGFVNEVQVIATVVSVNPQVNPDIVAMIGASAALSLSGIPFNGPIGAARVGYINDQYVLNPTQDELKESKLDLVVAGTEAAVLMVESEAELLSEDTMLGAVVFGHEQQQVVIQAINDLVKEAGKPRWDWQPEAVNDALNARVAALAESRLSDAYRITDKQERYAQVDVIKSETIEQLIAEDETLDANELGEILHAIEKNVVRSRVLAGEPRIDGREKDMIRGLDVRTGVLPRTHGSALFTRGETQALVTATLGTARDAQVLDELMGERTDSFLFHYNFPPYSVGETGMVGSPKRREIGHGRLAKRGVLAVMPDMDKFPYTVRVVSEITESNGSSSMASVCGASLALMDAGVPIKAAVAGIAMGLVKEGDNYVVLSDILGDEDHLGDMDFKVAGSRDGISALQMDIKIEGITKEIMQVALNQAKGARLHILGVMEQAINAPRGDISEFAPRIHTIKISTDKIKDVIGKGGSVIRALTEETGTTIEIEDDGTVKIAATDGEKAKYAIRRIEEITAEIEVGRIYNGKVTRIVDFGAFVAIGGGKEGLVHISQIADKRVEKVTDYLQMGQEVPVKVLEVDRQGRVRLSIKEATEQSQPAAAPEAPASEQAE</sequence>
<feature type="chain" id="PRO_0000381917" description="Polyribonucleotide nucleotidyltransferase">
    <location>
        <begin position="1"/>
        <end position="711"/>
    </location>
</feature>
<feature type="domain" description="KH" evidence="1">
    <location>
        <begin position="553"/>
        <end position="612"/>
    </location>
</feature>
<feature type="domain" description="S1 motif" evidence="1">
    <location>
        <begin position="622"/>
        <end position="690"/>
    </location>
</feature>
<feature type="region of interest" description="Disordered" evidence="2">
    <location>
        <begin position="690"/>
        <end position="711"/>
    </location>
</feature>
<feature type="compositionally biased region" description="Low complexity" evidence="2">
    <location>
        <begin position="694"/>
        <end position="711"/>
    </location>
</feature>
<feature type="binding site" evidence="1">
    <location>
        <position position="486"/>
    </location>
    <ligand>
        <name>Mg(2+)</name>
        <dbReference type="ChEBI" id="CHEBI:18420"/>
    </ligand>
</feature>
<feature type="binding site" evidence="1">
    <location>
        <position position="492"/>
    </location>
    <ligand>
        <name>Mg(2+)</name>
        <dbReference type="ChEBI" id="CHEBI:18420"/>
    </ligand>
</feature>
<reference key="1">
    <citation type="journal article" date="2009" name="PLoS ONE">
        <title>Salmonella paratyphi C: genetic divergence from Salmonella choleraesuis and pathogenic convergence with Salmonella typhi.</title>
        <authorList>
            <person name="Liu W.-Q."/>
            <person name="Feng Y."/>
            <person name="Wang Y."/>
            <person name="Zou Q.-H."/>
            <person name="Chen F."/>
            <person name="Guo J.-T."/>
            <person name="Peng Y.-H."/>
            <person name="Jin Y."/>
            <person name="Li Y.-G."/>
            <person name="Hu S.-N."/>
            <person name="Johnston R.N."/>
            <person name="Liu G.-R."/>
            <person name="Liu S.-L."/>
        </authorList>
    </citation>
    <scope>NUCLEOTIDE SEQUENCE [LARGE SCALE GENOMIC DNA]</scope>
    <source>
        <strain>RKS4594</strain>
    </source>
</reference>
<dbReference type="EC" id="2.7.7.8" evidence="1"/>
<dbReference type="EMBL" id="CP000857">
    <property type="protein sequence ID" value="ACN47438.1"/>
    <property type="status" value="ALT_INIT"/>
    <property type="molecule type" value="Genomic_DNA"/>
</dbReference>
<dbReference type="RefSeq" id="WP_001670767.1">
    <property type="nucleotide sequence ID" value="NC_012125.1"/>
</dbReference>
<dbReference type="SMR" id="C0PZ50"/>
<dbReference type="KEGG" id="sei:SPC_3353"/>
<dbReference type="HOGENOM" id="CLU_004217_2_2_6"/>
<dbReference type="Proteomes" id="UP000001599">
    <property type="component" value="Chromosome"/>
</dbReference>
<dbReference type="GO" id="GO:0005829">
    <property type="term" value="C:cytosol"/>
    <property type="evidence" value="ECO:0007669"/>
    <property type="project" value="TreeGrafter"/>
</dbReference>
<dbReference type="GO" id="GO:0000175">
    <property type="term" value="F:3'-5'-RNA exonuclease activity"/>
    <property type="evidence" value="ECO:0007669"/>
    <property type="project" value="TreeGrafter"/>
</dbReference>
<dbReference type="GO" id="GO:0000287">
    <property type="term" value="F:magnesium ion binding"/>
    <property type="evidence" value="ECO:0007669"/>
    <property type="project" value="UniProtKB-UniRule"/>
</dbReference>
<dbReference type="GO" id="GO:0004654">
    <property type="term" value="F:polyribonucleotide nucleotidyltransferase activity"/>
    <property type="evidence" value="ECO:0007669"/>
    <property type="project" value="UniProtKB-UniRule"/>
</dbReference>
<dbReference type="GO" id="GO:0003723">
    <property type="term" value="F:RNA binding"/>
    <property type="evidence" value="ECO:0007669"/>
    <property type="project" value="UniProtKB-UniRule"/>
</dbReference>
<dbReference type="GO" id="GO:0006402">
    <property type="term" value="P:mRNA catabolic process"/>
    <property type="evidence" value="ECO:0007669"/>
    <property type="project" value="UniProtKB-UniRule"/>
</dbReference>
<dbReference type="GO" id="GO:0006396">
    <property type="term" value="P:RNA processing"/>
    <property type="evidence" value="ECO:0007669"/>
    <property type="project" value="InterPro"/>
</dbReference>
<dbReference type="CDD" id="cd02393">
    <property type="entry name" value="KH-I_PNPase"/>
    <property type="match status" value="1"/>
</dbReference>
<dbReference type="CDD" id="cd11363">
    <property type="entry name" value="RNase_PH_PNPase_1"/>
    <property type="match status" value="1"/>
</dbReference>
<dbReference type="CDD" id="cd11364">
    <property type="entry name" value="RNase_PH_PNPase_2"/>
    <property type="match status" value="1"/>
</dbReference>
<dbReference type="CDD" id="cd04472">
    <property type="entry name" value="S1_PNPase"/>
    <property type="match status" value="1"/>
</dbReference>
<dbReference type="FunFam" id="2.40.50.140:FF:000023">
    <property type="entry name" value="Polyribonucleotide nucleotidyltransferase"/>
    <property type="match status" value="1"/>
</dbReference>
<dbReference type="FunFam" id="3.30.1370.10:FF:000001">
    <property type="entry name" value="Polyribonucleotide nucleotidyltransferase"/>
    <property type="match status" value="1"/>
</dbReference>
<dbReference type="FunFam" id="3.30.230.70:FF:000001">
    <property type="entry name" value="Polyribonucleotide nucleotidyltransferase"/>
    <property type="match status" value="1"/>
</dbReference>
<dbReference type="FunFam" id="3.30.230.70:FF:000002">
    <property type="entry name" value="Polyribonucleotide nucleotidyltransferase"/>
    <property type="match status" value="1"/>
</dbReference>
<dbReference type="Gene3D" id="3.30.230.70">
    <property type="entry name" value="GHMP Kinase, N-terminal domain"/>
    <property type="match status" value="2"/>
</dbReference>
<dbReference type="Gene3D" id="3.30.1370.10">
    <property type="entry name" value="K Homology domain, type 1"/>
    <property type="match status" value="1"/>
</dbReference>
<dbReference type="Gene3D" id="2.40.50.140">
    <property type="entry name" value="Nucleic acid-binding proteins"/>
    <property type="match status" value="1"/>
</dbReference>
<dbReference type="HAMAP" id="MF_01595">
    <property type="entry name" value="PNPase"/>
    <property type="match status" value="1"/>
</dbReference>
<dbReference type="InterPro" id="IPR001247">
    <property type="entry name" value="ExoRNase_PH_dom1"/>
</dbReference>
<dbReference type="InterPro" id="IPR015847">
    <property type="entry name" value="ExoRNase_PH_dom2"/>
</dbReference>
<dbReference type="InterPro" id="IPR036345">
    <property type="entry name" value="ExoRNase_PH_dom2_sf"/>
</dbReference>
<dbReference type="InterPro" id="IPR004087">
    <property type="entry name" value="KH_dom"/>
</dbReference>
<dbReference type="InterPro" id="IPR004088">
    <property type="entry name" value="KH_dom_type_1"/>
</dbReference>
<dbReference type="InterPro" id="IPR036612">
    <property type="entry name" value="KH_dom_type_1_sf"/>
</dbReference>
<dbReference type="InterPro" id="IPR012340">
    <property type="entry name" value="NA-bd_OB-fold"/>
</dbReference>
<dbReference type="InterPro" id="IPR012162">
    <property type="entry name" value="PNPase"/>
</dbReference>
<dbReference type="InterPro" id="IPR027408">
    <property type="entry name" value="PNPase/RNase_PH_dom_sf"/>
</dbReference>
<dbReference type="InterPro" id="IPR015848">
    <property type="entry name" value="PNPase_PH_RNA-bd_bac/org-type"/>
</dbReference>
<dbReference type="InterPro" id="IPR036456">
    <property type="entry name" value="PNPase_PH_RNA-bd_sf"/>
</dbReference>
<dbReference type="InterPro" id="IPR020568">
    <property type="entry name" value="Ribosomal_Su5_D2-typ_SF"/>
</dbReference>
<dbReference type="InterPro" id="IPR003029">
    <property type="entry name" value="S1_domain"/>
</dbReference>
<dbReference type="NCBIfam" id="TIGR03591">
    <property type="entry name" value="polynuc_phos"/>
    <property type="match status" value="1"/>
</dbReference>
<dbReference type="NCBIfam" id="NF008805">
    <property type="entry name" value="PRK11824.1"/>
    <property type="match status" value="1"/>
</dbReference>
<dbReference type="PANTHER" id="PTHR11252">
    <property type="entry name" value="POLYRIBONUCLEOTIDE NUCLEOTIDYLTRANSFERASE"/>
    <property type="match status" value="1"/>
</dbReference>
<dbReference type="PANTHER" id="PTHR11252:SF0">
    <property type="entry name" value="POLYRIBONUCLEOTIDE NUCLEOTIDYLTRANSFERASE 1, MITOCHONDRIAL"/>
    <property type="match status" value="1"/>
</dbReference>
<dbReference type="Pfam" id="PF00013">
    <property type="entry name" value="KH_1"/>
    <property type="match status" value="1"/>
</dbReference>
<dbReference type="Pfam" id="PF03726">
    <property type="entry name" value="PNPase"/>
    <property type="match status" value="1"/>
</dbReference>
<dbReference type="Pfam" id="PF01138">
    <property type="entry name" value="RNase_PH"/>
    <property type="match status" value="2"/>
</dbReference>
<dbReference type="Pfam" id="PF03725">
    <property type="entry name" value="RNase_PH_C"/>
    <property type="match status" value="2"/>
</dbReference>
<dbReference type="Pfam" id="PF00575">
    <property type="entry name" value="S1"/>
    <property type="match status" value="1"/>
</dbReference>
<dbReference type="PIRSF" id="PIRSF005499">
    <property type="entry name" value="PNPase"/>
    <property type="match status" value="1"/>
</dbReference>
<dbReference type="SMART" id="SM00322">
    <property type="entry name" value="KH"/>
    <property type="match status" value="1"/>
</dbReference>
<dbReference type="SMART" id="SM00316">
    <property type="entry name" value="S1"/>
    <property type="match status" value="1"/>
</dbReference>
<dbReference type="SUPFAM" id="SSF54791">
    <property type="entry name" value="Eukaryotic type KH-domain (KH-domain type I)"/>
    <property type="match status" value="1"/>
</dbReference>
<dbReference type="SUPFAM" id="SSF50249">
    <property type="entry name" value="Nucleic acid-binding proteins"/>
    <property type="match status" value="1"/>
</dbReference>
<dbReference type="SUPFAM" id="SSF46915">
    <property type="entry name" value="Polynucleotide phosphorylase/guanosine pentaphosphate synthase (PNPase/GPSI), domain 3"/>
    <property type="match status" value="1"/>
</dbReference>
<dbReference type="SUPFAM" id="SSF55666">
    <property type="entry name" value="Ribonuclease PH domain 2-like"/>
    <property type="match status" value="2"/>
</dbReference>
<dbReference type="SUPFAM" id="SSF54211">
    <property type="entry name" value="Ribosomal protein S5 domain 2-like"/>
    <property type="match status" value="2"/>
</dbReference>
<dbReference type="PROSITE" id="PS50084">
    <property type="entry name" value="KH_TYPE_1"/>
    <property type="match status" value="1"/>
</dbReference>
<dbReference type="PROSITE" id="PS50126">
    <property type="entry name" value="S1"/>
    <property type="match status" value="1"/>
</dbReference>
<comment type="function">
    <text evidence="1">Involved in mRNA degradation. Catalyzes the phosphorolysis of single-stranded polyribonucleotides processively in the 3'- to 5'-direction.</text>
</comment>
<comment type="catalytic activity">
    <reaction evidence="1">
        <text>RNA(n+1) + phosphate = RNA(n) + a ribonucleoside 5'-diphosphate</text>
        <dbReference type="Rhea" id="RHEA:22096"/>
        <dbReference type="Rhea" id="RHEA-COMP:14527"/>
        <dbReference type="Rhea" id="RHEA-COMP:17342"/>
        <dbReference type="ChEBI" id="CHEBI:43474"/>
        <dbReference type="ChEBI" id="CHEBI:57930"/>
        <dbReference type="ChEBI" id="CHEBI:140395"/>
        <dbReference type="EC" id="2.7.7.8"/>
    </reaction>
</comment>
<comment type="cofactor">
    <cofactor evidence="1">
        <name>Mg(2+)</name>
        <dbReference type="ChEBI" id="CHEBI:18420"/>
    </cofactor>
</comment>
<comment type="subunit">
    <text evidence="1">Component of the RNA degradosome, which is a multiprotein complex involved in RNA processing and mRNA degradation.</text>
</comment>
<comment type="subcellular location">
    <subcellularLocation>
        <location evidence="1">Cytoplasm</location>
    </subcellularLocation>
</comment>
<comment type="similarity">
    <text evidence="1">Belongs to the polyribonucleotide nucleotidyltransferase family.</text>
</comment>
<comment type="sequence caution" evidence="3">
    <conflict type="erroneous initiation">
        <sequence resource="EMBL-CDS" id="ACN47438"/>
    </conflict>
</comment>
<proteinExistence type="inferred from homology"/>
<organism>
    <name type="scientific">Salmonella paratyphi C (strain RKS4594)</name>
    <dbReference type="NCBI Taxonomy" id="476213"/>
    <lineage>
        <taxon>Bacteria</taxon>
        <taxon>Pseudomonadati</taxon>
        <taxon>Pseudomonadota</taxon>
        <taxon>Gammaproteobacteria</taxon>
        <taxon>Enterobacterales</taxon>
        <taxon>Enterobacteriaceae</taxon>
        <taxon>Salmonella</taxon>
    </lineage>
</organism>